<organism>
    <name type="scientific">Saccharolobus islandicus (strain M.14.25 / Kamchatka #1)</name>
    <name type="common">Sulfolobus islandicus</name>
    <dbReference type="NCBI Taxonomy" id="427317"/>
    <lineage>
        <taxon>Archaea</taxon>
        <taxon>Thermoproteota</taxon>
        <taxon>Thermoprotei</taxon>
        <taxon>Sulfolobales</taxon>
        <taxon>Sulfolobaceae</taxon>
        <taxon>Saccharolobus</taxon>
    </lineage>
</organism>
<gene>
    <name type="ordered locus">M1425_1450</name>
</gene>
<sequence length="139" mass="16328">MRSFEFFEHTADVGIRAYGKSLEEAFSNAALGVFEVITDTSKVKPIEYREIYLNGYDLENLLYKWIEELLYYYDSELMVFSKFDLMIDQDSMTLEGKAWGEKFNGKIHERRTVVKAMTYHQLSIEKTENGYVITFVVDI</sequence>
<keyword id="KW-0106">Calcium</keyword>
<keyword id="KW-0479">Metal-binding</keyword>
<keyword id="KW-0819">tRNA processing</keyword>
<protein>
    <recommendedName>
        <fullName evidence="2">Protein archease</fullName>
    </recommendedName>
</protein>
<reference key="1">
    <citation type="journal article" date="2009" name="Proc. Natl. Acad. Sci. U.S.A.">
        <title>Biogeography of the Sulfolobus islandicus pan-genome.</title>
        <authorList>
            <person name="Reno M.L."/>
            <person name="Held N.L."/>
            <person name="Fields C.J."/>
            <person name="Burke P.V."/>
            <person name="Whitaker R.J."/>
        </authorList>
    </citation>
    <scope>NUCLEOTIDE SEQUENCE [LARGE SCALE GENOMIC DNA]</scope>
    <source>
        <strain>M.14.25 / Kamchatka #1</strain>
    </source>
</reference>
<name>ARCH_SACI4</name>
<feature type="chain" id="PRO_1000213974" description="Protein archease">
    <location>
        <begin position="1"/>
        <end position="139"/>
    </location>
</feature>
<feature type="binding site" evidence="1">
    <location>
        <position position="12"/>
    </location>
    <ligand>
        <name>Ca(2+)</name>
        <dbReference type="ChEBI" id="CHEBI:29108"/>
    </ligand>
</feature>
<feature type="binding site" evidence="1">
    <location>
        <position position="138"/>
    </location>
    <ligand>
        <name>Ca(2+)</name>
        <dbReference type="ChEBI" id="CHEBI:29108"/>
    </ligand>
</feature>
<feature type="binding site" evidence="1">
    <location>
        <position position="139"/>
    </location>
    <ligand>
        <name>Ca(2+)</name>
        <dbReference type="ChEBI" id="CHEBI:29108"/>
    </ligand>
</feature>
<proteinExistence type="inferred from homology"/>
<comment type="function">
    <text evidence="1">Activates the tRNA-splicing ligase complex by facilitating the enzymatic turnover of catalytic subunit RtcB. Acts by promoting the guanylylation of RtcB, a key intermediate step in tRNA ligation. Can also alter the NTP specificity of RtcB such that ATP, dGTP or ITP is used efficiently (By similarity).</text>
</comment>
<comment type="similarity">
    <text evidence="2">Belongs to the archease family.</text>
</comment>
<accession>C3MVY1</accession>
<dbReference type="EMBL" id="CP001400">
    <property type="protein sequence ID" value="ACP38203.1"/>
    <property type="molecule type" value="Genomic_DNA"/>
</dbReference>
<dbReference type="RefSeq" id="WP_012711448.1">
    <property type="nucleotide sequence ID" value="NC_012588.1"/>
</dbReference>
<dbReference type="SMR" id="C3MVY1"/>
<dbReference type="KEGG" id="sia:M1425_1450"/>
<dbReference type="HOGENOM" id="CLU_111362_3_0_2"/>
<dbReference type="Proteomes" id="UP000001350">
    <property type="component" value="Chromosome"/>
</dbReference>
<dbReference type="GO" id="GO:0005509">
    <property type="term" value="F:calcium ion binding"/>
    <property type="evidence" value="ECO:0007669"/>
    <property type="project" value="UniProtKB-UniRule"/>
</dbReference>
<dbReference type="GO" id="GO:0006388">
    <property type="term" value="P:tRNA splicing, via endonucleolytic cleavage and ligation"/>
    <property type="evidence" value="ECO:0007669"/>
    <property type="project" value="UniProtKB-UniRule"/>
</dbReference>
<dbReference type="Gene3D" id="3.55.10.10">
    <property type="entry name" value="Archease domain"/>
    <property type="match status" value="1"/>
</dbReference>
<dbReference type="HAMAP" id="MF_01222">
    <property type="entry name" value="Archease_arch"/>
    <property type="match status" value="1"/>
</dbReference>
<dbReference type="InterPro" id="IPR002804">
    <property type="entry name" value="Archease"/>
</dbReference>
<dbReference type="InterPro" id="IPR022952">
    <property type="entry name" value="Archease_arc"/>
</dbReference>
<dbReference type="InterPro" id="IPR023572">
    <property type="entry name" value="Archease_dom"/>
</dbReference>
<dbReference type="InterPro" id="IPR036820">
    <property type="entry name" value="Archease_dom_sf"/>
</dbReference>
<dbReference type="NCBIfam" id="NF001617">
    <property type="entry name" value="PRK00407.1"/>
    <property type="match status" value="1"/>
</dbReference>
<dbReference type="PANTHER" id="PTHR12682">
    <property type="entry name" value="ARCHEASE"/>
    <property type="match status" value="1"/>
</dbReference>
<dbReference type="PANTHER" id="PTHR12682:SF11">
    <property type="entry name" value="PROTEIN ARCHEASE"/>
    <property type="match status" value="1"/>
</dbReference>
<dbReference type="Pfam" id="PF01951">
    <property type="entry name" value="Archease"/>
    <property type="match status" value="1"/>
</dbReference>
<dbReference type="SUPFAM" id="SSF69819">
    <property type="entry name" value="MTH1598-like"/>
    <property type="match status" value="1"/>
</dbReference>
<evidence type="ECO:0000250" key="1"/>
<evidence type="ECO:0000255" key="2">
    <source>
        <dbReference type="HAMAP-Rule" id="MF_01222"/>
    </source>
</evidence>